<proteinExistence type="inferred from homology"/>
<reference key="1">
    <citation type="submission" date="2003-10" db="EMBL/GenBank/DDBJ databases">
        <title>The complete genome sequence of the alkaliphilic Bacillus clausii KSM-K16.</title>
        <authorList>
            <person name="Takaki Y."/>
            <person name="Kageyama Y."/>
            <person name="Shimamura S."/>
            <person name="Suzuki H."/>
            <person name="Nishi S."/>
            <person name="Hatada Y."/>
            <person name="Kawai S."/>
            <person name="Ito S."/>
            <person name="Horikoshi K."/>
        </authorList>
    </citation>
    <scope>NUCLEOTIDE SEQUENCE [LARGE SCALE GENOMIC DNA]</scope>
    <source>
        <strain>KSM-K16</strain>
    </source>
</reference>
<sequence length="276" mass="31383">MDIRYEVGPKDFKTYTTEEMREAFLVESLFEEGALHLSYSHYDRLIIGGAVPSHEAIALDAGDALKTDYFLERRELAVINIGGKGTVTVGKDTYKMAKRDCLYVGRGNEHVEFASNDPQQPARFYLVSATAHQTYPTKLAPIGEAQPTKLGSDAESNNRTIYKYIHKDGIESCQLMVGMTLLEPNNMWNTMPAHLHDRRMEAYLYFDMEEDTRVFHFMGQPQETRHLVIKNEQAVISPPWSIHSGVGTSNYTFIWAMAGENYTFTDMDTVAMEELK</sequence>
<keyword id="KW-0413">Isomerase</keyword>
<keyword id="KW-0479">Metal-binding</keyword>
<keyword id="KW-1185">Reference proteome</keyword>
<keyword id="KW-0862">Zinc</keyword>
<evidence type="ECO:0000255" key="1">
    <source>
        <dbReference type="HAMAP-Rule" id="MF_00687"/>
    </source>
</evidence>
<protein>
    <recommendedName>
        <fullName evidence="1">4-deoxy-L-threo-5-hexosulose-uronate ketol-isomerase</fullName>
        <ecNumber evidence="1">5.3.1.17</ecNumber>
    </recommendedName>
    <alternativeName>
        <fullName evidence="1">5-keto-4-deoxyuronate isomerase</fullName>
    </alternativeName>
    <alternativeName>
        <fullName evidence="1">DKI isomerase</fullName>
    </alternativeName>
</protein>
<dbReference type="EC" id="5.3.1.17" evidence="1"/>
<dbReference type="EMBL" id="AP006627">
    <property type="protein sequence ID" value="BAD63533.1"/>
    <property type="molecule type" value="Genomic_DNA"/>
</dbReference>
<dbReference type="RefSeq" id="WP_011245849.1">
    <property type="nucleotide sequence ID" value="NC_006582.1"/>
</dbReference>
<dbReference type="SMR" id="Q5WJC2"/>
<dbReference type="STRING" id="66692.ABC0994"/>
<dbReference type="KEGG" id="bcl:ABC0994"/>
<dbReference type="eggNOG" id="COG3717">
    <property type="taxonomic scope" value="Bacteria"/>
</dbReference>
<dbReference type="HOGENOM" id="CLU_062609_0_0_9"/>
<dbReference type="OrthoDB" id="9770644at2"/>
<dbReference type="UniPathway" id="UPA00545">
    <property type="reaction ID" value="UER00826"/>
</dbReference>
<dbReference type="Proteomes" id="UP000001168">
    <property type="component" value="Chromosome"/>
</dbReference>
<dbReference type="GO" id="GO:0008697">
    <property type="term" value="F:4-deoxy-L-threo-5-hexosulose-uronate ketol-isomerase activity"/>
    <property type="evidence" value="ECO:0007669"/>
    <property type="project" value="UniProtKB-UniRule"/>
</dbReference>
<dbReference type="GO" id="GO:0008270">
    <property type="term" value="F:zinc ion binding"/>
    <property type="evidence" value="ECO:0007669"/>
    <property type="project" value="UniProtKB-UniRule"/>
</dbReference>
<dbReference type="GO" id="GO:0019698">
    <property type="term" value="P:D-galacturonate catabolic process"/>
    <property type="evidence" value="ECO:0007669"/>
    <property type="project" value="TreeGrafter"/>
</dbReference>
<dbReference type="GO" id="GO:0042840">
    <property type="term" value="P:D-glucuronate catabolic process"/>
    <property type="evidence" value="ECO:0007669"/>
    <property type="project" value="TreeGrafter"/>
</dbReference>
<dbReference type="GO" id="GO:0045490">
    <property type="term" value="P:pectin catabolic process"/>
    <property type="evidence" value="ECO:0007669"/>
    <property type="project" value="UniProtKB-UniRule"/>
</dbReference>
<dbReference type="CDD" id="cd20491">
    <property type="entry name" value="cupin_KduI_C"/>
    <property type="match status" value="1"/>
</dbReference>
<dbReference type="CDD" id="cd20294">
    <property type="entry name" value="cupin_KduI_N"/>
    <property type="match status" value="1"/>
</dbReference>
<dbReference type="Gene3D" id="2.60.120.10">
    <property type="entry name" value="Jelly Rolls"/>
    <property type="match status" value="1"/>
</dbReference>
<dbReference type="Gene3D" id="2.60.120.520">
    <property type="entry name" value="pectin degrading enzyme 5-keto 4- deoxyuronate isomerase, domain 1"/>
    <property type="match status" value="1"/>
</dbReference>
<dbReference type="HAMAP" id="MF_00687">
    <property type="entry name" value="KduI"/>
    <property type="match status" value="1"/>
</dbReference>
<dbReference type="InterPro" id="IPR007045">
    <property type="entry name" value="KduI"/>
</dbReference>
<dbReference type="InterPro" id="IPR021120">
    <property type="entry name" value="KduI/IolB_isomerase"/>
</dbReference>
<dbReference type="InterPro" id="IPR027449">
    <property type="entry name" value="KduI_N"/>
</dbReference>
<dbReference type="InterPro" id="IPR014710">
    <property type="entry name" value="RmlC-like_jellyroll"/>
</dbReference>
<dbReference type="InterPro" id="IPR011051">
    <property type="entry name" value="RmlC_Cupin_sf"/>
</dbReference>
<dbReference type="NCBIfam" id="NF002091">
    <property type="entry name" value="PRK00924.1"/>
    <property type="match status" value="1"/>
</dbReference>
<dbReference type="PANTHER" id="PTHR38461">
    <property type="entry name" value="4-DEOXY-L-THREO-5-HEXOSULOSE-URONATE KETOL-ISOMERASE"/>
    <property type="match status" value="1"/>
</dbReference>
<dbReference type="PANTHER" id="PTHR38461:SF1">
    <property type="entry name" value="4-DEOXY-L-THREO-5-HEXOSULOSE-URONATE KETOL-ISOMERASE"/>
    <property type="match status" value="1"/>
</dbReference>
<dbReference type="Pfam" id="PF04962">
    <property type="entry name" value="KduI"/>
    <property type="match status" value="1"/>
</dbReference>
<dbReference type="PIRSF" id="PIRSF006625">
    <property type="entry name" value="KduI"/>
    <property type="match status" value="1"/>
</dbReference>
<dbReference type="SUPFAM" id="SSF51182">
    <property type="entry name" value="RmlC-like cupins"/>
    <property type="match status" value="1"/>
</dbReference>
<comment type="function">
    <text evidence="1">Catalyzes the isomerization of 5-dehydro-4-deoxy-D-glucuronate to 3-deoxy-D-glycero-2,5-hexodiulosonate.</text>
</comment>
<comment type="catalytic activity">
    <reaction evidence="1">
        <text>5-dehydro-4-deoxy-D-glucuronate = 3-deoxy-D-glycero-2,5-hexodiulosonate</text>
        <dbReference type="Rhea" id="RHEA:23896"/>
        <dbReference type="ChEBI" id="CHEBI:17117"/>
        <dbReference type="ChEBI" id="CHEBI:29071"/>
        <dbReference type="EC" id="5.3.1.17"/>
    </reaction>
</comment>
<comment type="cofactor">
    <cofactor evidence="1">
        <name>Zn(2+)</name>
        <dbReference type="ChEBI" id="CHEBI:29105"/>
    </cofactor>
    <text evidence="1">Binds 1 zinc ion per subunit.</text>
</comment>
<comment type="pathway">
    <text evidence="1">Glycan metabolism; pectin degradation; 2-dehydro-3-deoxy-D-gluconate from pectin: step 4/5.</text>
</comment>
<comment type="similarity">
    <text evidence="1">Belongs to the KduI family.</text>
</comment>
<organism>
    <name type="scientific">Shouchella clausii (strain KSM-K16)</name>
    <name type="common">Alkalihalobacillus clausii</name>
    <dbReference type="NCBI Taxonomy" id="66692"/>
    <lineage>
        <taxon>Bacteria</taxon>
        <taxon>Bacillati</taxon>
        <taxon>Bacillota</taxon>
        <taxon>Bacilli</taxon>
        <taxon>Bacillales</taxon>
        <taxon>Bacillaceae</taxon>
        <taxon>Shouchella</taxon>
    </lineage>
</organism>
<name>KDUI_SHOC1</name>
<accession>Q5WJC2</accession>
<gene>
    <name evidence="1" type="primary">kduI</name>
    <name type="ordered locus">ABC0994</name>
</gene>
<feature type="chain" id="PRO_1000045081" description="4-deoxy-L-threo-5-hexosulose-uronate ketol-isomerase">
    <location>
        <begin position="1"/>
        <end position="276"/>
    </location>
</feature>
<feature type="binding site" evidence="1">
    <location>
        <position position="194"/>
    </location>
    <ligand>
        <name>Zn(2+)</name>
        <dbReference type="ChEBI" id="CHEBI:29105"/>
    </ligand>
</feature>
<feature type="binding site" evidence="1">
    <location>
        <position position="196"/>
    </location>
    <ligand>
        <name>Zn(2+)</name>
        <dbReference type="ChEBI" id="CHEBI:29105"/>
    </ligand>
</feature>
<feature type="binding site" evidence="1">
    <location>
        <position position="201"/>
    </location>
    <ligand>
        <name>Zn(2+)</name>
        <dbReference type="ChEBI" id="CHEBI:29105"/>
    </ligand>
</feature>
<feature type="binding site" evidence="1">
    <location>
        <position position="243"/>
    </location>
    <ligand>
        <name>Zn(2+)</name>
        <dbReference type="ChEBI" id="CHEBI:29105"/>
    </ligand>
</feature>